<sequence>MLMPKRTKFRKMHKGRNRGLANVGNKISFGEFGLKAMERGRMTSRQIEAARRVMTRKVKRGAKIWIRVFPDKPITNKPLEVRMGKGKGSVEYWVAQVQPGRVLYEMQGVDEVVAREAFELAAAKLPFKTQFVTRTVM</sequence>
<comment type="function">
    <text evidence="1">Binds 23S rRNA and is also seen to make contacts with the A and possibly P site tRNAs.</text>
</comment>
<comment type="subunit">
    <text evidence="1">Part of the 50S ribosomal subunit.</text>
</comment>
<comment type="similarity">
    <text evidence="1">Belongs to the universal ribosomal protein uL16 family.</text>
</comment>
<dbReference type="EMBL" id="CP000109">
    <property type="protein sequence ID" value="ABB40898.1"/>
    <property type="molecule type" value="Genomic_DNA"/>
</dbReference>
<dbReference type="SMR" id="Q31IX5"/>
<dbReference type="STRING" id="317025.Tcr_0302"/>
<dbReference type="KEGG" id="tcx:Tcr_0302"/>
<dbReference type="eggNOG" id="COG0197">
    <property type="taxonomic scope" value="Bacteria"/>
</dbReference>
<dbReference type="HOGENOM" id="CLU_078858_2_1_6"/>
<dbReference type="OrthoDB" id="9802589at2"/>
<dbReference type="GO" id="GO:0022625">
    <property type="term" value="C:cytosolic large ribosomal subunit"/>
    <property type="evidence" value="ECO:0007669"/>
    <property type="project" value="TreeGrafter"/>
</dbReference>
<dbReference type="GO" id="GO:0019843">
    <property type="term" value="F:rRNA binding"/>
    <property type="evidence" value="ECO:0007669"/>
    <property type="project" value="UniProtKB-UniRule"/>
</dbReference>
<dbReference type="GO" id="GO:0003735">
    <property type="term" value="F:structural constituent of ribosome"/>
    <property type="evidence" value="ECO:0007669"/>
    <property type="project" value="InterPro"/>
</dbReference>
<dbReference type="GO" id="GO:0000049">
    <property type="term" value="F:tRNA binding"/>
    <property type="evidence" value="ECO:0007669"/>
    <property type="project" value="UniProtKB-KW"/>
</dbReference>
<dbReference type="GO" id="GO:0006412">
    <property type="term" value="P:translation"/>
    <property type="evidence" value="ECO:0007669"/>
    <property type="project" value="UniProtKB-UniRule"/>
</dbReference>
<dbReference type="CDD" id="cd01433">
    <property type="entry name" value="Ribosomal_L16_L10e"/>
    <property type="match status" value="1"/>
</dbReference>
<dbReference type="FunFam" id="3.90.1170.10:FF:000001">
    <property type="entry name" value="50S ribosomal protein L16"/>
    <property type="match status" value="1"/>
</dbReference>
<dbReference type="Gene3D" id="3.90.1170.10">
    <property type="entry name" value="Ribosomal protein L10e/L16"/>
    <property type="match status" value="1"/>
</dbReference>
<dbReference type="HAMAP" id="MF_01342">
    <property type="entry name" value="Ribosomal_uL16"/>
    <property type="match status" value="1"/>
</dbReference>
<dbReference type="InterPro" id="IPR047873">
    <property type="entry name" value="Ribosomal_uL16"/>
</dbReference>
<dbReference type="InterPro" id="IPR000114">
    <property type="entry name" value="Ribosomal_uL16_bact-type"/>
</dbReference>
<dbReference type="InterPro" id="IPR020798">
    <property type="entry name" value="Ribosomal_uL16_CS"/>
</dbReference>
<dbReference type="InterPro" id="IPR016180">
    <property type="entry name" value="Ribosomal_uL16_dom"/>
</dbReference>
<dbReference type="InterPro" id="IPR036920">
    <property type="entry name" value="Ribosomal_uL16_sf"/>
</dbReference>
<dbReference type="NCBIfam" id="TIGR01164">
    <property type="entry name" value="rplP_bact"/>
    <property type="match status" value="1"/>
</dbReference>
<dbReference type="PANTHER" id="PTHR12220">
    <property type="entry name" value="50S/60S RIBOSOMAL PROTEIN L16"/>
    <property type="match status" value="1"/>
</dbReference>
<dbReference type="PANTHER" id="PTHR12220:SF13">
    <property type="entry name" value="LARGE RIBOSOMAL SUBUNIT PROTEIN UL16M"/>
    <property type="match status" value="1"/>
</dbReference>
<dbReference type="Pfam" id="PF00252">
    <property type="entry name" value="Ribosomal_L16"/>
    <property type="match status" value="1"/>
</dbReference>
<dbReference type="PRINTS" id="PR00060">
    <property type="entry name" value="RIBOSOMALL16"/>
</dbReference>
<dbReference type="SUPFAM" id="SSF54686">
    <property type="entry name" value="Ribosomal protein L16p/L10e"/>
    <property type="match status" value="1"/>
</dbReference>
<dbReference type="PROSITE" id="PS00586">
    <property type="entry name" value="RIBOSOMAL_L16_1"/>
    <property type="match status" value="1"/>
</dbReference>
<dbReference type="PROSITE" id="PS00701">
    <property type="entry name" value="RIBOSOMAL_L16_2"/>
    <property type="match status" value="1"/>
</dbReference>
<gene>
    <name evidence="1" type="primary">rplP</name>
    <name type="ordered locus">Tcr_0302</name>
</gene>
<evidence type="ECO:0000255" key="1">
    <source>
        <dbReference type="HAMAP-Rule" id="MF_01342"/>
    </source>
</evidence>
<evidence type="ECO:0000305" key="2"/>
<organism>
    <name type="scientific">Hydrogenovibrio crunogenus (strain DSM 25203 / XCL-2)</name>
    <name type="common">Thiomicrospira crunogena</name>
    <dbReference type="NCBI Taxonomy" id="317025"/>
    <lineage>
        <taxon>Bacteria</taxon>
        <taxon>Pseudomonadati</taxon>
        <taxon>Pseudomonadota</taxon>
        <taxon>Gammaproteobacteria</taxon>
        <taxon>Thiotrichales</taxon>
        <taxon>Piscirickettsiaceae</taxon>
        <taxon>Hydrogenovibrio</taxon>
    </lineage>
</organism>
<accession>Q31IX5</accession>
<protein>
    <recommendedName>
        <fullName evidence="1">Large ribosomal subunit protein uL16</fullName>
    </recommendedName>
    <alternativeName>
        <fullName evidence="2">50S ribosomal protein L16</fullName>
    </alternativeName>
</protein>
<name>RL16_HYDCU</name>
<feature type="chain" id="PRO_0000251687" description="Large ribosomal subunit protein uL16">
    <location>
        <begin position="1"/>
        <end position="137"/>
    </location>
</feature>
<reference key="1">
    <citation type="journal article" date="2006" name="PLoS Biol.">
        <title>The genome of deep-sea vent chemolithoautotroph Thiomicrospira crunogena XCL-2.</title>
        <authorList>
            <person name="Scott K.M."/>
            <person name="Sievert S.M."/>
            <person name="Abril F.N."/>
            <person name="Ball L.A."/>
            <person name="Barrett C.J."/>
            <person name="Blake R.A."/>
            <person name="Boller A.J."/>
            <person name="Chain P.S.G."/>
            <person name="Clark J.A."/>
            <person name="Davis C.R."/>
            <person name="Detter C."/>
            <person name="Do K.F."/>
            <person name="Dobrinski K.P."/>
            <person name="Faza B.I."/>
            <person name="Fitzpatrick K.A."/>
            <person name="Freyermuth S.K."/>
            <person name="Harmer T.L."/>
            <person name="Hauser L.J."/>
            <person name="Huegler M."/>
            <person name="Kerfeld C.A."/>
            <person name="Klotz M.G."/>
            <person name="Kong W.W."/>
            <person name="Land M."/>
            <person name="Lapidus A."/>
            <person name="Larimer F.W."/>
            <person name="Longo D.L."/>
            <person name="Lucas S."/>
            <person name="Malfatti S.A."/>
            <person name="Massey S.E."/>
            <person name="Martin D.D."/>
            <person name="McCuddin Z."/>
            <person name="Meyer F."/>
            <person name="Moore J.L."/>
            <person name="Ocampo L.H. Jr."/>
            <person name="Paul J.H."/>
            <person name="Paulsen I.T."/>
            <person name="Reep D.K."/>
            <person name="Ren Q."/>
            <person name="Ross R.L."/>
            <person name="Sato P.Y."/>
            <person name="Thomas P."/>
            <person name="Tinkham L.E."/>
            <person name="Zeruth G.T."/>
        </authorList>
    </citation>
    <scope>NUCLEOTIDE SEQUENCE [LARGE SCALE GENOMIC DNA]</scope>
    <source>
        <strain>DSM 25203 / XCL-2</strain>
    </source>
</reference>
<keyword id="KW-0687">Ribonucleoprotein</keyword>
<keyword id="KW-0689">Ribosomal protein</keyword>
<keyword id="KW-0694">RNA-binding</keyword>
<keyword id="KW-0699">rRNA-binding</keyword>
<keyword id="KW-0820">tRNA-binding</keyword>
<proteinExistence type="inferred from homology"/>